<name>Y1100_STAAB</name>
<dbReference type="EMBL" id="AJ938182">
    <property type="protein sequence ID" value="CAI80789.1"/>
    <property type="molecule type" value="Genomic_DNA"/>
</dbReference>
<dbReference type="RefSeq" id="WP_000531320.1">
    <property type="nucleotide sequence ID" value="NC_007622.1"/>
</dbReference>
<dbReference type="SMR" id="Q2YXI0"/>
<dbReference type="KEGG" id="sab:SAB1100"/>
<dbReference type="HOGENOM" id="CLU_129218_1_1_9"/>
<dbReference type="Gene3D" id="1.10.10.10">
    <property type="entry name" value="Winged helix-like DNA-binding domain superfamily/Winged helix DNA-binding domain"/>
    <property type="match status" value="1"/>
</dbReference>
<dbReference type="HAMAP" id="MF_00245">
    <property type="entry name" value="UPF0122"/>
    <property type="match status" value="1"/>
</dbReference>
<dbReference type="InterPro" id="IPR013324">
    <property type="entry name" value="RNA_pol_sigma_r3/r4-like"/>
</dbReference>
<dbReference type="InterPro" id="IPR007394">
    <property type="entry name" value="UPF0122"/>
</dbReference>
<dbReference type="InterPro" id="IPR054831">
    <property type="entry name" value="UPF0122_fam_protein"/>
</dbReference>
<dbReference type="InterPro" id="IPR036388">
    <property type="entry name" value="WH-like_DNA-bd_sf"/>
</dbReference>
<dbReference type="NCBIfam" id="NF001067">
    <property type="entry name" value="PRK00118.1-2"/>
    <property type="match status" value="1"/>
</dbReference>
<dbReference type="NCBIfam" id="NF001070">
    <property type="entry name" value="PRK00118.1-6"/>
    <property type="match status" value="1"/>
</dbReference>
<dbReference type="NCBIfam" id="NF045758">
    <property type="entry name" value="YlxM"/>
    <property type="match status" value="1"/>
</dbReference>
<dbReference type="PANTHER" id="PTHR40083">
    <property type="entry name" value="UPF0122 PROTEIN CBO2450/CLC_2298"/>
    <property type="match status" value="1"/>
</dbReference>
<dbReference type="PANTHER" id="PTHR40083:SF1">
    <property type="entry name" value="UPF0122 PROTEIN YLXM"/>
    <property type="match status" value="1"/>
</dbReference>
<dbReference type="Pfam" id="PF04297">
    <property type="entry name" value="UPF0122"/>
    <property type="match status" value="1"/>
</dbReference>
<dbReference type="SUPFAM" id="SSF88659">
    <property type="entry name" value="Sigma3 and sigma4 domains of RNA polymerase sigma factors"/>
    <property type="match status" value="1"/>
</dbReference>
<organism>
    <name type="scientific">Staphylococcus aureus (strain bovine RF122 / ET3-1)</name>
    <dbReference type="NCBI Taxonomy" id="273036"/>
    <lineage>
        <taxon>Bacteria</taxon>
        <taxon>Bacillati</taxon>
        <taxon>Bacillota</taxon>
        <taxon>Bacilli</taxon>
        <taxon>Bacillales</taxon>
        <taxon>Staphylococcaceae</taxon>
        <taxon>Staphylococcus</taxon>
    </lineage>
</organism>
<reference key="1">
    <citation type="journal article" date="2007" name="PLoS ONE">
        <title>Molecular correlates of host specialization in Staphylococcus aureus.</title>
        <authorList>
            <person name="Herron-Olson L."/>
            <person name="Fitzgerald J.R."/>
            <person name="Musser J.M."/>
            <person name="Kapur V."/>
        </authorList>
    </citation>
    <scope>NUCLEOTIDE SEQUENCE [LARGE SCALE GENOMIC DNA]</scope>
    <source>
        <strain>bovine RF122 / ET3-1</strain>
    </source>
</reference>
<evidence type="ECO:0000255" key="1">
    <source>
        <dbReference type="HAMAP-Rule" id="MF_00245"/>
    </source>
</evidence>
<sequence>MGQNDLVKTLRMNYLFDFYQSLLTNKQRNYLELFYLEDYSLSEIADTFNVSRQAVYDNIRRTGDLVEDYEKKLELYQKFEQRREIYDEMKQHLSNPEQIQRYIQQLEDLE</sequence>
<protein>
    <recommendedName>
        <fullName evidence="1">UPF0122 protein SAB1100</fullName>
    </recommendedName>
</protein>
<comment type="function">
    <text evidence="1">Might take part in the signal recognition particle (SRP) pathway. This is inferred from the conservation of its genetic proximity to ftsY/ffh. May be a regulatory protein.</text>
</comment>
<comment type="similarity">
    <text evidence="1">Belongs to the UPF0122 family.</text>
</comment>
<proteinExistence type="inferred from homology"/>
<accession>Q2YXI0</accession>
<feature type="chain" id="PRO_1000012540" description="UPF0122 protein SAB1100">
    <location>
        <begin position="1"/>
        <end position="110"/>
    </location>
</feature>
<gene>
    <name type="ordered locus">SAB1100</name>
</gene>